<accession>O43854</accession>
<accession>B2R763</accession>
<accession>O43855</accession>
<accession>Q5D094</accession>
<accession>Q8N610</accession>
<dbReference type="EMBL" id="U70312">
    <property type="protein sequence ID" value="AAC02648.1"/>
    <property type="molecule type" value="mRNA"/>
</dbReference>
<dbReference type="EMBL" id="U70313">
    <property type="protein sequence ID" value="AAC02649.1"/>
    <property type="molecule type" value="mRNA"/>
</dbReference>
<dbReference type="EMBL" id="AK312858">
    <property type="protein sequence ID" value="BAG35710.1"/>
    <property type="molecule type" value="mRNA"/>
</dbReference>
<dbReference type="EMBL" id="CH471084">
    <property type="protein sequence ID" value="EAW95917.1"/>
    <property type="molecule type" value="Genomic_DNA"/>
</dbReference>
<dbReference type="EMBL" id="CH471084">
    <property type="protein sequence ID" value="EAW95918.1"/>
    <property type="molecule type" value="Genomic_DNA"/>
</dbReference>
<dbReference type="EMBL" id="BC030828">
    <property type="protein sequence ID" value="AAH30828.1"/>
    <property type="molecule type" value="mRNA"/>
</dbReference>
<dbReference type="EMBL" id="BC053656">
    <property type="protein sequence ID" value="AAH53656.1"/>
    <property type="molecule type" value="mRNA"/>
</dbReference>
<dbReference type="CCDS" id="CCDS4062.1">
    <molecule id="O43854-1"/>
</dbReference>
<dbReference type="CCDS" id="CCDS64195.1">
    <molecule id="O43854-2"/>
</dbReference>
<dbReference type="RefSeq" id="NP_001265571.1">
    <molecule id="O43854-2"/>
    <property type="nucleotide sequence ID" value="NM_001278642.1"/>
</dbReference>
<dbReference type="RefSeq" id="NP_005702.3">
    <molecule id="O43854-1"/>
    <property type="nucleotide sequence ID" value="NM_005711.4"/>
</dbReference>
<dbReference type="PDB" id="4D90">
    <property type="method" value="X-ray"/>
    <property type="resolution" value="2.60 A"/>
    <property type="chains" value="A/B=24-157"/>
</dbReference>
<dbReference type="PDBsum" id="4D90"/>
<dbReference type="SMR" id="O43854"/>
<dbReference type="BioGRID" id="115394">
    <property type="interactions" value="38"/>
</dbReference>
<dbReference type="ELM" id="O43854"/>
<dbReference type="FunCoup" id="O43854">
    <property type="interactions" value="191"/>
</dbReference>
<dbReference type="IntAct" id="O43854">
    <property type="interactions" value="23"/>
</dbReference>
<dbReference type="STRING" id="9606.ENSP00000296591"/>
<dbReference type="GlyCosmos" id="O43854">
    <property type="glycosylation" value="3 sites, No reported glycans"/>
</dbReference>
<dbReference type="GlyGen" id="O43854">
    <property type="glycosylation" value="6 sites, 1 N-linked glycan (1 site), 2 O-linked glycans (2 sites)"/>
</dbReference>
<dbReference type="iPTMnet" id="O43854"/>
<dbReference type="PhosphoSitePlus" id="O43854"/>
<dbReference type="SwissPalm" id="O43854"/>
<dbReference type="BioMuta" id="EDIL3"/>
<dbReference type="jPOST" id="O43854"/>
<dbReference type="MassIVE" id="O43854"/>
<dbReference type="PaxDb" id="9606-ENSP00000296591"/>
<dbReference type="PeptideAtlas" id="O43854"/>
<dbReference type="ProteomicsDB" id="49207">
    <molecule id="O43854-1"/>
</dbReference>
<dbReference type="ProteomicsDB" id="49208">
    <molecule id="O43854-2"/>
</dbReference>
<dbReference type="Pumba" id="O43854"/>
<dbReference type="Antibodypedia" id="24753">
    <property type="antibodies" value="292 antibodies from 30 providers"/>
</dbReference>
<dbReference type="DNASU" id="10085"/>
<dbReference type="Ensembl" id="ENST00000296591.10">
    <molecule id="O43854-1"/>
    <property type="protein sequence ID" value="ENSP00000296591.4"/>
    <property type="gene ID" value="ENSG00000164176.13"/>
</dbReference>
<dbReference type="Ensembl" id="ENST00000380138.3">
    <molecule id="O43854-2"/>
    <property type="protein sequence ID" value="ENSP00000369483.3"/>
    <property type="gene ID" value="ENSG00000164176.13"/>
</dbReference>
<dbReference type="GeneID" id="10085"/>
<dbReference type="KEGG" id="hsa:10085"/>
<dbReference type="MANE-Select" id="ENST00000296591.10">
    <property type="protein sequence ID" value="ENSP00000296591.4"/>
    <property type="RefSeq nucleotide sequence ID" value="NM_005711.5"/>
    <property type="RefSeq protein sequence ID" value="NP_005702.3"/>
</dbReference>
<dbReference type="UCSC" id="uc003kio.3">
    <molecule id="O43854-1"/>
    <property type="organism name" value="human"/>
</dbReference>
<dbReference type="AGR" id="HGNC:3173"/>
<dbReference type="CTD" id="10085"/>
<dbReference type="DisGeNET" id="10085"/>
<dbReference type="GeneCards" id="EDIL3"/>
<dbReference type="HGNC" id="HGNC:3173">
    <property type="gene designation" value="EDIL3"/>
</dbReference>
<dbReference type="HPA" id="ENSG00000164176">
    <property type="expression patterns" value="Tissue enriched (brain)"/>
</dbReference>
<dbReference type="MIM" id="606018">
    <property type="type" value="gene"/>
</dbReference>
<dbReference type="neXtProt" id="NX_O43854"/>
<dbReference type="OpenTargets" id="ENSG00000164176"/>
<dbReference type="PharmGKB" id="PA27613"/>
<dbReference type="VEuPathDB" id="HostDB:ENSG00000164176"/>
<dbReference type="eggNOG" id="ENOG502QU9M">
    <property type="taxonomic scope" value="Eukaryota"/>
</dbReference>
<dbReference type="GeneTree" id="ENSGT00940000158144"/>
<dbReference type="HOGENOM" id="CLU_030066_0_1_1"/>
<dbReference type="InParanoid" id="O43854"/>
<dbReference type="OMA" id="RWTIYQD"/>
<dbReference type="OrthoDB" id="10046852at2759"/>
<dbReference type="PAN-GO" id="O43854">
    <property type="GO annotations" value="0 GO annotations based on evolutionary models"/>
</dbReference>
<dbReference type="PhylomeDB" id="O43854"/>
<dbReference type="TreeFam" id="TF330156"/>
<dbReference type="PathwayCommons" id="O43854"/>
<dbReference type="Reactome" id="R-HSA-9926550">
    <property type="pathway name" value="Regulation of MITF-M-dependent genes involved in extracellular matrix, focal adhesion and epithelial-to-mesenchymal transition"/>
</dbReference>
<dbReference type="SignaLink" id="O43854"/>
<dbReference type="BioGRID-ORCS" id="10085">
    <property type="hits" value="14 hits in 1149 CRISPR screens"/>
</dbReference>
<dbReference type="ChiTaRS" id="EDIL3">
    <property type="organism name" value="human"/>
</dbReference>
<dbReference type="EvolutionaryTrace" id="O43854"/>
<dbReference type="GenomeRNAi" id="10085"/>
<dbReference type="Pharos" id="O43854">
    <property type="development level" value="Tbio"/>
</dbReference>
<dbReference type="PRO" id="PR:O43854"/>
<dbReference type="Proteomes" id="UP000005640">
    <property type="component" value="Chromosome 5"/>
</dbReference>
<dbReference type="RNAct" id="O43854">
    <property type="molecule type" value="protein"/>
</dbReference>
<dbReference type="Bgee" id="ENSG00000164176">
    <property type="expression patterns" value="Expressed in lateral globus pallidus and 192 other cell types or tissues"/>
</dbReference>
<dbReference type="GO" id="GO:0062023">
    <property type="term" value="C:collagen-containing extracellular matrix"/>
    <property type="evidence" value="ECO:0007005"/>
    <property type="project" value="BHF-UCL"/>
</dbReference>
<dbReference type="GO" id="GO:0070062">
    <property type="term" value="C:extracellular exosome"/>
    <property type="evidence" value="ECO:0007005"/>
    <property type="project" value="UniProtKB"/>
</dbReference>
<dbReference type="GO" id="GO:0005576">
    <property type="term" value="C:extracellular region"/>
    <property type="evidence" value="ECO:0000304"/>
    <property type="project" value="Reactome"/>
</dbReference>
<dbReference type="GO" id="GO:1903561">
    <property type="term" value="C:extracellular vesicle"/>
    <property type="evidence" value="ECO:0007005"/>
    <property type="project" value="UniProtKB"/>
</dbReference>
<dbReference type="GO" id="GO:0005509">
    <property type="term" value="F:calcium ion binding"/>
    <property type="evidence" value="ECO:0007669"/>
    <property type="project" value="InterPro"/>
</dbReference>
<dbReference type="GO" id="GO:0005178">
    <property type="term" value="F:integrin binding"/>
    <property type="evidence" value="ECO:0000304"/>
    <property type="project" value="ProtInc"/>
</dbReference>
<dbReference type="GO" id="GO:0007155">
    <property type="term" value="P:cell adhesion"/>
    <property type="evidence" value="ECO:0007669"/>
    <property type="project" value="UniProtKB-KW"/>
</dbReference>
<dbReference type="GO" id="GO:0010811">
    <property type="term" value="P:positive regulation of cell-substrate adhesion"/>
    <property type="evidence" value="ECO:0007669"/>
    <property type="project" value="Ensembl"/>
</dbReference>
<dbReference type="CDD" id="cd00054">
    <property type="entry name" value="EGF_CA"/>
    <property type="match status" value="3"/>
</dbReference>
<dbReference type="CDD" id="cd00057">
    <property type="entry name" value="FA58C"/>
    <property type="match status" value="2"/>
</dbReference>
<dbReference type="FunFam" id="2.60.120.260:FF:000002">
    <property type="entry name" value="Coagulation factor VIII"/>
    <property type="match status" value="2"/>
</dbReference>
<dbReference type="FunFam" id="2.10.25.10:FF:000246">
    <property type="entry name" value="EGF-like repeat and discoidin I-like domain-containing protein 3"/>
    <property type="match status" value="1"/>
</dbReference>
<dbReference type="FunFam" id="2.10.25.10:FF:000447">
    <property type="entry name" value="EGF-like repeat and discoidin I-like domain-containing protein 3"/>
    <property type="match status" value="1"/>
</dbReference>
<dbReference type="Gene3D" id="2.60.120.260">
    <property type="entry name" value="Galactose-binding domain-like"/>
    <property type="match status" value="2"/>
</dbReference>
<dbReference type="Gene3D" id="2.10.25.10">
    <property type="entry name" value="Laminin"/>
    <property type="match status" value="3"/>
</dbReference>
<dbReference type="InterPro" id="IPR001881">
    <property type="entry name" value="EGF-like_Ca-bd_dom"/>
</dbReference>
<dbReference type="InterPro" id="IPR013032">
    <property type="entry name" value="EGF-like_CS"/>
</dbReference>
<dbReference type="InterPro" id="IPR000742">
    <property type="entry name" value="EGF-like_dom"/>
</dbReference>
<dbReference type="InterPro" id="IPR000152">
    <property type="entry name" value="EGF-type_Asp/Asn_hydroxyl_site"/>
</dbReference>
<dbReference type="InterPro" id="IPR018097">
    <property type="entry name" value="EGF_Ca-bd_CS"/>
</dbReference>
<dbReference type="InterPro" id="IPR000421">
    <property type="entry name" value="FA58C"/>
</dbReference>
<dbReference type="InterPro" id="IPR008979">
    <property type="entry name" value="Galactose-bd-like_sf"/>
</dbReference>
<dbReference type="InterPro" id="IPR050633">
    <property type="entry name" value="Neuropilin_MCO_CoagFactor"/>
</dbReference>
<dbReference type="PANTHER" id="PTHR46806:SF9">
    <property type="entry name" value="EGF-LIKE REPEAT AND DISCOIDIN I-LIKE DOMAIN-CONTAINING PROTEIN 3 PRECURSOR"/>
    <property type="match status" value="1"/>
</dbReference>
<dbReference type="PANTHER" id="PTHR46806">
    <property type="entry name" value="F5/8 TYPE C DOMAIN-CONTAINING PROTEIN"/>
    <property type="match status" value="1"/>
</dbReference>
<dbReference type="Pfam" id="PF00008">
    <property type="entry name" value="EGF"/>
    <property type="match status" value="2"/>
</dbReference>
<dbReference type="Pfam" id="PF00754">
    <property type="entry name" value="F5_F8_type_C"/>
    <property type="match status" value="2"/>
</dbReference>
<dbReference type="Pfam" id="PF12661">
    <property type="entry name" value="hEGF"/>
    <property type="match status" value="1"/>
</dbReference>
<dbReference type="SMART" id="SM00181">
    <property type="entry name" value="EGF"/>
    <property type="match status" value="3"/>
</dbReference>
<dbReference type="SMART" id="SM00179">
    <property type="entry name" value="EGF_CA"/>
    <property type="match status" value="3"/>
</dbReference>
<dbReference type="SMART" id="SM00231">
    <property type="entry name" value="FA58C"/>
    <property type="match status" value="2"/>
</dbReference>
<dbReference type="SUPFAM" id="SSF57196">
    <property type="entry name" value="EGF/Laminin"/>
    <property type="match status" value="3"/>
</dbReference>
<dbReference type="SUPFAM" id="SSF49785">
    <property type="entry name" value="Galactose-binding domain-like"/>
    <property type="match status" value="2"/>
</dbReference>
<dbReference type="PROSITE" id="PS00010">
    <property type="entry name" value="ASX_HYDROXYL"/>
    <property type="match status" value="1"/>
</dbReference>
<dbReference type="PROSITE" id="PS00022">
    <property type="entry name" value="EGF_1"/>
    <property type="match status" value="2"/>
</dbReference>
<dbReference type="PROSITE" id="PS01186">
    <property type="entry name" value="EGF_2"/>
    <property type="match status" value="2"/>
</dbReference>
<dbReference type="PROSITE" id="PS50026">
    <property type="entry name" value="EGF_3"/>
    <property type="match status" value="3"/>
</dbReference>
<dbReference type="PROSITE" id="PS01187">
    <property type="entry name" value="EGF_CA"/>
    <property type="match status" value="1"/>
</dbReference>
<dbReference type="PROSITE" id="PS01285">
    <property type="entry name" value="FA58C_1"/>
    <property type="match status" value="2"/>
</dbReference>
<dbReference type="PROSITE" id="PS01286">
    <property type="entry name" value="FA58C_2"/>
    <property type="match status" value="2"/>
</dbReference>
<dbReference type="PROSITE" id="PS50022">
    <property type="entry name" value="FA58C_3"/>
    <property type="match status" value="2"/>
</dbReference>
<evidence type="ECO:0000250" key="1"/>
<evidence type="ECO:0000255" key="2"/>
<evidence type="ECO:0000255" key="3">
    <source>
        <dbReference type="PROSITE-ProRule" id="PRU00076"/>
    </source>
</evidence>
<evidence type="ECO:0000255" key="4">
    <source>
        <dbReference type="PROSITE-ProRule" id="PRU00081"/>
    </source>
</evidence>
<evidence type="ECO:0000269" key="5">
    <source>
    </source>
</evidence>
<evidence type="ECO:0000303" key="6">
    <source>
    </source>
</evidence>
<evidence type="ECO:0000303" key="7">
    <source>
    </source>
</evidence>
<evidence type="ECO:0000305" key="8"/>
<evidence type="ECO:0000305" key="9">
    <source>
    </source>
</evidence>
<evidence type="ECO:0007829" key="10">
    <source>
        <dbReference type="PDB" id="4D90"/>
    </source>
</evidence>
<protein>
    <recommendedName>
        <fullName>EGF-like repeat and discoidin I-like domain-containing protein 3</fullName>
    </recommendedName>
    <alternativeName>
        <fullName>Developmentally-regulated endothelial cell locus 1 protein</fullName>
    </alternativeName>
    <alternativeName>
        <fullName>Integrin-binding protein DEL1</fullName>
    </alternativeName>
</protein>
<sequence>MKRSVAVWLLVGLSLGVPQFGKGDICDPNPCENGGICLPGLADGSFSCECPDGFTDPNCSSVVEVASDEEEPTSAGPCTPNPCHNGGTCEISEAYRGDTFIGYVCKCPRGFNGIHCQHNINECEVEPCKNGGICTDLVANYSCECPGEFMGRNCQYKCSGPLGIEGGIISNQQITASSTHRALFGLQKWYPYYARLNKKGLINAWTAAENDRWPWIQINLQRKMRVTGVITQGAKRIGSPEYIKSYKIAYSNDGKTWAMYKVKGTNEDMVFRGNIDNNTPYANSFTPPIKAQYVRLYPQVCRRHCTLRMELLGCELSGCSEPLGMKSGHIQDYQITASSIFRTLNMDMFTWEPRKARLDKQGKVNAWTSGHNDQSQWLQVDLLVPTKVTGIITQGAKDFGHVQFVGSYKLAYSNDGEHWTVYQDEKQRKDKVFQGNFDNDTHRKNVIDPPIYARHIRILPWSWYGRITLRSELLGCTEEE</sequence>
<reference key="1">
    <citation type="journal article" date="1998" name="Genes Dev.">
        <title>Cloning and characterization of developmental endothelial locus-1: an embryonic endothelial cell protein that binds the alphavbeta3 integrin receptor.</title>
        <authorList>
            <person name="Hidai C."/>
            <person name="Zupancic T.J."/>
            <person name="Penta K."/>
            <person name="Mikhail A."/>
            <person name="Kawana M."/>
            <person name="Quertermous E.E."/>
            <person name="Aoka Y."/>
            <person name="Fukagawa M."/>
            <person name="Matsui Y."/>
            <person name="Platika D."/>
            <person name="Auerbach R."/>
            <person name="Hogan B.L.M."/>
            <person name="Snodgrass R."/>
            <person name="Quertermous T."/>
        </authorList>
    </citation>
    <scope>NUCLEOTIDE SEQUENCE [MRNA] (ISOFORMS 1 AND 2)</scope>
    <scope>CHARACTERIZATION</scope>
    <source>
        <tissue>Embryonic lung</tissue>
    </source>
</reference>
<reference key="2">
    <citation type="journal article" date="2004" name="Nat. Genet.">
        <title>Complete sequencing and characterization of 21,243 full-length human cDNAs.</title>
        <authorList>
            <person name="Ota T."/>
            <person name="Suzuki Y."/>
            <person name="Nishikawa T."/>
            <person name="Otsuki T."/>
            <person name="Sugiyama T."/>
            <person name="Irie R."/>
            <person name="Wakamatsu A."/>
            <person name="Hayashi K."/>
            <person name="Sato H."/>
            <person name="Nagai K."/>
            <person name="Kimura K."/>
            <person name="Makita H."/>
            <person name="Sekine M."/>
            <person name="Obayashi M."/>
            <person name="Nishi T."/>
            <person name="Shibahara T."/>
            <person name="Tanaka T."/>
            <person name="Ishii S."/>
            <person name="Yamamoto J."/>
            <person name="Saito K."/>
            <person name="Kawai Y."/>
            <person name="Isono Y."/>
            <person name="Nakamura Y."/>
            <person name="Nagahari K."/>
            <person name="Murakami K."/>
            <person name="Yasuda T."/>
            <person name="Iwayanagi T."/>
            <person name="Wagatsuma M."/>
            <person name="Shiratori A."/>
            <person name="Sudo H."/>
            <person name="Hosoiri T."/>
            <person name="Kaku Y."/>
            <person name="Kodaira H."/>
            <person name="Kondo H."/>
            <person name="Sugawara M."/>
            <person name="Takahashi M."/>
            <person name="Kanda K."/>
            <person name="Yokoi T."/>
            <person name="Furuya T."/>
            <person name="Kikkawa E."/>
            <person name="Omura Y."/>
            <person name="Abe K."/>
            <person name="Kamihara K."/>
            <person name="Katsuta N."/>
            <person name="Sato K."/>
            <person name="Tanikawa M."/>
            <person name="Yamazaki M."/>
            <person name="Ninomiya K."/>
            <person name="Ishibashi T."/>
            <person name="Yamashita H."/>
            <person name="Murakawa K."/>
            <person name="Fujimori K."/>
            <person name="Tanai H."/>
            <person name="Kimata M."/>
            <person name="Watanabe M."/>
            <person name="Hiraoka S."/>
            <person name="Chiba Y."/>
            <person name="Ishida S."/>
            <person name="Ono Y."/>
            <person name="Takiguchi S."/>
            <person name="Watanabe S."/>
            <person name="Yosida M."/>
            <person name="Hotuta T."/>
            <person name="Kusano J."/>
            <person name="Kanehori K."/>
            <person name="Takahashi-Fujii A."/>
            <person name="Hara H."/>
            <person name="Tanase T.-O."/>
            <person name="Nomura Y."/>
            <person name="Togiya S."/>
            <person name="Komai F."/>
            <person name="Hara R."/>
            <person name="Takeuchi K."/>
            <person name="Arita M."/>
            <person name="Imose N."/>
            <person name="Musashino K."/>
            <person name="Yuuki H."/>
            <person name="Oshima A."/>
            <person name="Sasaki N."/>
            <person name="Aotsuka S."/>
            <person name="Yoshikawa Y."/>
            <person name="Matsunawa H."/>
            <person name="Ichihara T."/>
            <person name="Shiohata N."/>
            <person name="Sano S."/>
            <person name="Moriya S."/>
            <person name="Momiyama H."/>
            <person name="Satoh N."/>
            <person name="Takami S."/>
            <person name="Terashima Y."/>
            <person name="Suzuki O."/>
            <person name="Nakagawa S."/>
            <person name="Senoh A."/>
            <person name="Mizoguchi H."/>
            <person name="Goto Y."/>
            <person name="Shimizu F."/>
            <person name="Wakebe H."/>
            <person name="Hishigaki H."/>
            <person name="Watanabe T."/>
            <person name="Sugiyama A."/>
            <person name="Takemoto M."/>
            <person name="Kawakami B."/>
            <person name="Yamazaki M."/>
            <person name="Watanabe K."/>
            <person name="Kumagai A."/>
            <person name="Itakura S."/>
            <person name="Fukuzumi Y."/>
            <person name="Fujimori Y."/>
            <person name="Komiyama M."/>
            <person name="Tashiro H."/>
            <person name="Tanigami A."/>
            <person name="Fujiwara T."/>
            <person name="Ono T."/>
            <person name="Yamada K."/>
            <person name="Fujii Y."/>
            <person name="Ozaki K."/>
            <person name="Hirao M."/>
            <person name="Ohmori Y."/>
            <person name="Kawabata A."/>
            <person name="Hikiji T."/>
            <person name="Kobatake N."/>
            <person name="Inagaki H."/>
            <person name="Ikema Y."/>
            <person name="Okamoto S."/>
            <person name="Okitani R."/>
            <person name="Kawakami T."/>
            <person name="Noguchi S."/>
            <person name="Itoh T."/>
            <person name="Shigeta K."/>
            <person name="Senba T."/>
            <person name="Matsumura K."/>
            <person name="Nakajima Y."/>
            <person name="Mizuno T."/>
            <person name="Morinaga M."/>
            <person name="Sasaki M."/>
            <person name="Togashi T."/>
            <person name="Oyama M."/>
            <person name="Hata H."/>
            <person name="Watanabe M."/>
            <person name="Komatsu T."/>
            <person name="Mizushima-Sugano J."/>
            <person name="Satoh T."/>
            <person name="Shirai Y."/>
            <person name="Takahashi Y."/>
            <person name="Nakagawa K."/>
            <person name="Okumura K."/>
            <person name="Nagase T."/>
            <person name="Nomura N."/>
            <person name="Kikuchi H."/>
            <person name="Masuho Y."/>
            <person name="Yamashita R."/>
            <person name="Nakai K."/>
            <person name="Yada T."/>
            <person name="Nakamura Y."/>
            <person name="Ohara O."/>
            <person name="Isogai T."/>
            <person name="Sugano S."/>
        </authorList>
    </citation>
    <scope>NUCLEOTIDE SEQUENCE [LARGE SCALE MRNA] (ISOFORM 1)</scope>
    <source>
        <tissue>Trachea</tissue>
    </source>
</reference>
<reference key="3">
    <citation type="submission" date="2005-07" db="EMBL/GenBank/DDBJ databases">
        <authorList>
            <person name="Mural R.J."/>
            <person name="Istrail S."/>
            <person name="Sutton G.G."/>
            <person name="Florea L."/>
            <person name="Halpern A.L."/>
            <person name="Mobarry C.M."/>
            <person name="Lippert R."/>
            <person name="Walenz B."/>
            <person name="Shatkay H."/>
            <person name="Dew I."/>
            <person name="Miller J.R."/>
            <person name="Flanigan M.J."/>
            <person name="Edwards N.J."/>
            <person name="Bolanos R."/>
            <person name="Fasulo D."/>
            <person name="Halldorsson B.V."/>
            <person name="Hannenhalli S."/>
            <person name="Turner R."/>
            <person name="Yooseph S."/>
            <person name="Lu F."/>
            <person name="Nusskern D.R."/>
            <person name="Shue B.C."/>
            <person name="Zheng X.H."/>
            <person name="Zhong F."/>
            <person name="Delcher A.L."/>
            <person name="Huson D.H."/>
            <person name="Kravitz S.A."/>
            <person name="Mouchard L."/>
            <person name="Reinert K."/>
            <person name="Remington K.A."/>
            <person name="Clark A.G."/>
            <person name="Waterman M.S."/>
            <person name="Eichler E.E."/>
            <person name="Adams M.D."/>
            <person name="Hunkapiller M.W."/>
            <person name="Myers E.W."/>
            <person name="Venter J.C."/>
        </authorList>
    </citation>
    <scope>NUCLEOTIDE SEQUENCE [LARGE SCALE GENOMIC DNA]</scope>
</reference>
<reference key="4">
    <citation type="journal article" date="2004" name="Genome Res.">
        <title>The status, quality, and expansion of the NIH full-length cDNA project: the Mammalian Gene Collection (MGC).</title>
        <authorList>
            <consortium name="The MGC Project Team"/>
        </authorList>
    </citation>
    <scope>NUCLEOTIDE SEQUENCE [LARGE SCALE MRNA] (ISOFORMS 1 AND 2)</scope>
    <source>
        <tissue>Brain</tissue>
    </source>
</reference>
<reference key="5">
    <citation type="journal article" date="2012" name="FASEB J.">
        <title>The RGD finger of Del-1 is a unique structural feature critical for integrin binding.</title>
        <authorList>
            <person name="Schurpf T."/>
            <person name="Chen Q."/>
            <person name="Liu J.H."/>
            <person name="Wang R."/>
            <person name="Springer T.A."/>
            <person name="Wang J.H."/>
        </authorList>
    </citation>
    <scope>X-RAY CRYSTALLOGRAPHY (2.6 ANGSTROMS) OF 24-157</scope>
    <scope>RGD MOTIF</scope>
    <scope>DISULFIDE BONDS</scope>
    <scope>CALCIUM-BINDING SITES</scope>
    <scope>GLYCOSYLATION AT THR-73; THR-88 AND ASN-140</scope>
</reference>
<proteinExistence type="evidence at protein level"/>
<gene>
    <name type="primary">EDIL3</name>
    <name type="synonym">DEL1</name>
</gene>
<name>EDIL3_HUMAN</name>
<keyword id="KW-0002">3D-structure</keyword>
<keyword id="KW-0025">Alternative splicing</keyword>
<keyword id="KW-0106">Calcium</keyword>
<keyword id="KW-0130">Cell adhesion</keyword>
<keyword id="KW-0217">Developmental protein</keyword>
<keyword id="KW-1015">Disulfide bond</keyword>
<keyword id="KW-0245">EGF-like domain</keyword>
<keyword id="KW-0325">Glycoprotein</keyword>
<keyword id="KW-0479">Metal-binding</keyword>
<keyword id="KW-1267">Proteomics identification</keyword>
<keyword id="KW-1185">Reference proteome</keyword>
<keyword id="KW-0677">Repeat</keyword>
<keyword id="KW-0964">Secreted</keyword>
<keyword id="KW-0732">Signal</keyword>
<feature type="signal peptide" evidence="2">
    <location>
        <begin position="1"/>
        <end position="23"/>
    </location>
</feature>
<feature type="chain" id="PRO_0000007522" description="EGF-like repeat and discoidin I-like domain-containing protein 3">
    <location>
        <begin position="24"/>
        <end position="480"/>
    </location>
</feature>
<feature type="domain" description="EGF-like 1" evidence="3">
    <location>
        <begin position="24"/>
        <end position="60"/>
    </location>
</feature>
<feature type="domain" description="EGF-like 2" evidence="3">
    <location>
        <begin position="74"/>
        <end position="117"/>
    </location>
</feature>
<feature type="domain" description="EGF-like 3" evidence="3">
    <location>
        <begin position="119"/>
        <end position="155"/>
    </location>
</feature>
<feature type="domain" description="F5/8 type C 1" evidence="4">
    <location>
        <begin position="158"/>
        <end position="314"/>
    </location>
</feature>
<feature type="domain" description="F5/8 type C 2" evidence="4">
    <location>
        <begin position="319"/>
        <end position="476"/>
    </location>
</feature>
<feature type="short sequence motif" description="Cell attachment site">
    <location>
        <begin position="96"/>
        <end position="98"/>
    </location>
</feature>
<feature type="binding site">
    <location>
        <position position="119"/>
    </location>
    <ligand>
        <name>Ca(2+)</name>
        <dbReference type="ChEBI" id="CHEBI:29108"/>
    </ligand>
</feature>
<feature type="binding site">
    <location>
        <position position="120"/>
    </location>
    <ligand>
        <name>Ca(2+)</name>
        <dbReference type="ChEBI" id="CHEBI:29108"/>
    </ligand>
</feature>
<feature type="binding site">
    <location>
        <position position="122"/>
    </location>
    <ligand>
        <name>Ca(2+)</name>
        <dbReference type="ChEBI" id="CHEBI:29108"/>
    </ligand>
</feature>
<feature type="binding site">
    <location>
        <position position="136"/>
    </location>
    <ligand>
        <name>Ca(2+)</name>
        <dbReference type="ChEBI" id="CHEBI:29108"/>
    </ligand>
</feature>
<feature type="binding site">
    <location>
        <position position="137"/>
    </location>
    <ligand>
        <name>Ca(2+)</name>
        <dbReference type="ChEBI" id="CHEBI:29108"/>
    </ligand>
</feature>
<feature type="glycosylation site" description="O-linked (GalNAc...) threonine" evidence="9">
    <location>
        <position position="73"/>
    </location>
</feature>
<feature type="glycosylation site" description="O-linked (Fuc...) threonine" evidence="5">
    <location>
        <position position="88"/>
    </location>
</feature>
<feature type="glycosylation site" description="N-linked (GlcNAc...) asparagine" evidence="5">
    <location>
        <position position="140"/>
    </location>
</feature>
<feature type="disulfide bond" evidence="5">
    <location>
        <begin position="26"/>
        <end position="37"/>
    </location>
</feature>
<feature type="disulfide bond" evidence="5">
    <location>
        <begin position="31"/>
        <end position="48"/>
    </location>
</feature>
<feature type="disulfide bond" evidence="5">
    <location>
        <begin position="50"/>
        <end position="59"/>
    </location>
</feature>
<feature type="disulfide bond" evidence="5">
    <location>
        <begin position="78"/>
        <end position="89"/>
    </location>
</feature>
<feature type="disulfide bond" evidence="5">
    <location>
        <begin position="83"/>
        <end position="105"/>
    </location>
</feature>
<feature type="disulfide bond" evidence="5">
    <location>
        <begin position="107"/>
        <end position="116"/>
    </location>
</feature>
<feature type="disulfide bond" evidence="5">
    <location>
        <begin position="123"/>
        <end position="134"/>
    </location>
</feature>
<feature type="disulfide bond" evidence="5">
    <location>
        <begin position="128"/>
        <end position="143"/>
    </location>
</feature>
<feature type="disulfide bond" evidence="5">
    <location>
        <begin position="145"/>
        <end position="154"/>
    </location>
</feature>
<feature type="disulfide bond" evidence="1">
    <location>
        <begin position="158"/>
        <end position="314"/>
    </location>
</feature>
<feature type="disulfide bond" evidence="1">
    <location>
        <begin position="301"/>
        <end position="305"/>
    </location>
</feature>
<feature type="disulfide bond" evidence="1">
    <location>
        <begin position="319"/>
        <end position="476"/>
    </location>
</feature>
<feature type="splice variant" id="VSP_050006" description="In isoform 2." evidence="6 7">
    <original>A</original>
    <variation>G</variation>
    <location>
        <position position="66"/>
    </location>
</feature>
<feature type="splice variant" id="VSP_050007" description="In isoform 2." evidence="6 7">
    <location>
        <begin position="67"/>
        <end position="76"/>
    </location>
</feature>
<feature type="sequence conflict" description="In Ref. 4; AAH30828." evidence="8" ref="4">
    <original>G</original>
    <variation>S</variation>
    <location>
        <position position="16"/>
    </location>
</feature>
<feature type="helix" evidence="10">
    <location>
        <begin position="32"/>
        <end position="34"/>
    </location>
</feature>
<feature type="strand" evidence="10">
    <location>
        <begin position="36"/>
        <end position="38"/>
    </location>
</feature>
<feature type="strand" evidence="10">
    <location>
        <begin position="47"/>
        <end position="49"/>
    </location>
</feature>
<feature type="turn" evidence="10">
    <location>
        <begin position="56"/>
        <end position="59"/>
    </location>
</feature>
<feature type="turn" evidence="10">
    <location>
        <begin position="66"/>
        <end position="70"/>
    </location>
</feature>
<feature type="strand" evidence="10">
    <location>
        <begin position="88"/>
        <end position="91"/>
    </location>
</feature>
<feature type="strand" evidence="10">
    <location>
        <begin position="103"/>
        <end position="106"/>
    </location>
</feature>
<feature type="strand" evidence="10">
    <location>
        <begin position="111"/>
        <end position="113"/>
    </location>
</feature>
<feature type="turn" evidence="10">
    <location>
        <begin position="122"/>
        <end position="125"/>
    </location>
</feature>
<feature type="strand" evidence="10">
    <location>
        <begin position="133"/>
        <end position="137"/>
    </location>
</feature>
<feature type="strand" evidence="10">
    <location>
        <begin position="140"/>
        <end position="144"/>
    </location>
</feature>
<comment type="function">
    <text>Promotes adhesion of endothelial cells through interaction with the alpha-v/beta-3 integrin receptor. Inhibits formation of vascular-like structures. May be involved in regulation of vascular morphogenesis of remodeling in embryonic development.</text>
</comment>
<comment type="subcellular location">
    <subcellularLocation>
        <location>Secreted</location>
    </subcellularLocation>
</comment>
<comment type="alternative products">
    <event type="alternative splicing"/>
    <isoform>
        <id>O43854-1</id>
        <name>1</name>
        <name>Long</name>
        <sequence type="displayed"/>
    </isoform>
    <isoform>
        <id>O43854-2</id>
        <name>2</name>
        <name>Short</name>
        <name>Z20</name>
        <sequence type="described" ref="VSP_050006 VSP_050007"/>
    </isoform>
</comment>
<comment type="domain">
    <text>EGF2 and EGF3 form a rigid rod via an interdomain calcium ion binding site, while the long linker between EGF1 and EGF2 lends considerable flexibility to EGF1.</text>
</comment>
<organism>
    <name type="scientific">Homo sapiens</name>
    <name type="common">Human</name>
    <dbReference type="NCBI Taxonomy" id="9606"/>
    <lineage>
        <taxon>Eukaryota</taxon>
        <taxon>Metazoa</taxon>
        <taxon>Chordata</taxon>
        <taxon>Craniata</taxon>
        <taxon>Vertebrata</taxon>
        <taxon>Euteleostomi</taxon>
        <taxon>Mammalia</taxon>
        <taxon>Eutheria</taxon>
        <taxon>Euarchontoglires</taxon>
        <taxon>Primates</taxon>
        <taxon>Haplorrhini</taxon>
        <taxon>Catarrhini</taxon>
        <taxon>Hominidae</taxon>
        <taxon>Homo</taxon>
    </lineage>
</organism>